<reference key="1">
    <citation type="submission" date="1999-08" db="EMBL/GenBank/DDBJ databases">
        <title>Sequences and map position of 31 Arabidopsis thaliana cDNAs encoding organellar polypeptides.</title>
        <authorList>
            <person name="Legen J."/>
            <person name="Misera S."/>
            <person name="Herrmann R.G."/>
            <person name="Altschmied L."/>
        </authorList>
    </citation>
    <scope>NUCLEOTIDE SEQUENCE [MRNA]</scope>
    <source>
        <strain>cv. Columbia</strain>
    </source>
</reference>
<reference key="2">
    <citation type="journal article" date="2000" name="Nature">
        <title>Sequence and analysis of chromosome 1 of the plant Arabidopsis thaliana.</title>
        <authorList>
            <person name="Theologis A."/>
            <person name="Ecker J.R."/>
            <person name="Palm C.J."/>
            <person name="Federspiel N.A."/>
            <person name="Kaul S."/>
            <person name="White O."/>
            <person name="Alonso J."/>
            <person name="Altafi H."/>
            <person name="Araujo R."/>
            <person name="Bowman C.L."/>
            <person name="Brooks S.Y."/>
            <person name="Buehler E."/>
            <person name="Chan A."/>
            <person name="Chao Q."/>
            <person name="Chen H."/>
            <person name="Cheuk R.F."/>
            <person name="Chin C.W."/>
            <person name="Chung M.K."/>
            <person name="Conn L."/>
            <person name="Conway A.B."/>
            <person name="Conway A.R."/>
            <person name="Creasy T.H."/>
            <person name="Dewar K."/>
            <person name="Dunn P."/>
            <person name="Etgu P."/>
            <person name="Feldblyum T.V."/>
            <person name="Feng J.-D."/>
            <person name="Fong B."/>
            <person name="Fujii C.Y."/>
            <person name="Gill J.E."/>
            <person name="Goldsmith A.D."/>
            <person name="Haas B."/>
            <person name="Hansen N.F."/>
            <person name="Hughes B."/>
            <person name="Huizar L."/>
            <person name="Hunter J.L."/>
            <person name="Jenkins J."/>
            <person name="Johnson-Hopson C."/>
            <person name="Khan S."/>
            <person name="Khaykin E."/>
            <person name="Kim C.J."/>
            <person name="Koo H.L."/>
            <person name="Kremenetskaia I."/>
            <person name="Kurtz D.B."/>
            <person name="Kwan A."/>
            <person name="Lam B."/>
            <person name="Langin-Hooper S."/>
            <person name="Lee A."/>
            <person name="Lee J.M."/>
            <person name="Lenz C.A."/>
            <person name="Li J.H."/>
            <person name="Li Y.-P."/>
            <person name="Lin X."/>
            <person name="Liu S.X."/>
            <person name="Liu Z.A."/>
            <person name="Luros J.S."/>
            <person name="Maiti R."/>
            <person name="Marziali A."/>
            <person name="Militscher J."/>
            <person name="Miranda M."/>
            <person name="Nguyen M."/>
            <person name="Nierman W.C."/>
            <person name="Osborne B.I."/>
            <person name="Pai G."/>
            <person name="Peterson J."/>
            <person name="Pham P.K."/>
            <person name="Rizzo M."/>
            <person name="Rooney T."/>
            <person name="Rowley D."/>
            <person name="Sakano H."/>
            <person name="Salzberg S.L."/>
            <person name="Schwartz J.R."/>
            <person name="Shinn P."/>
            <person name="Southwick A.M."/>
            <person name="Sun H."/>
            <person name="Tallon L.J."/>
            <person name="Tambunga G."/>
            <person name="Toriumi M.J."/>
            <person name="Town C.D."/>
            <person name="Utterback T."/>
            <person name="Van Aken S."/>
            <person name="Vaysberg M."/>
            <person name="Vysotskaia V.S."/>
            <person name="Walker M."/>
            <person name="Wu D."/>
            <person name="Yu G."/>
            <person name="Fraser C.M."/>
            <person name="Venter J.C."/>
            <person name="Davis R.W."/>
        </authorList>
    </citation>
    <scope>NUCLEOTIDE SEQUENCE [LARGE SCALE GENOMIC DNA]</scope>
    <source>
        <strain>cv. Columbia</strain>
    </source>
</reference>
<reference key="3">
    <citation type="journal article" date="2017" name="Plant J.">
        <title>Araport11: a complete reannotation of the Arabidopsis thaliana reference genome.</title>
        <authorList>
            <person name="Cheng C.Y."/>
            <person name="Krishnakumar V."/>
            <person name="Chan A.P."/>
            <person name="Thibaud-Nissen F."/>
            <person name="Schobel S."/>
            <person name="Town C.D."/>
        </authorList>
    </citation>
    <scope>GENOME REANNOTATION</scope>
    <source>
        <strain>cv. Columbia</strain>
    </source>
</reference>
<reference key="4">
    <citation type="journal article" date="2003" name="Science">
        <title>Empirical analysis of transcriptional activity in the Arabidopsis genome.</title>
        <authorList>
            <person name="Yamada K."/>
            <person name="Lim J."/>
            <person name="Dale J.M."/>
            <person name="Chen H."/>
            <person name="Shinn P."/>
            <person name="Palm C.J."/>
            <person name="Southwick A.M."/>
            <person name="Wu H.C."/>
            <person name="Kim C.J."/>
            <person name="Nguyen M."/>
            <person name="Pham P.K."/>
            <person name="Cheuk R.F."/>
            <person name="Karlin-Newmann G."/>
            <person name="Liu S.X."/>
            <person name="Lam B."/>
            <person name="Sakano H."/>
            <person name="Wu T."/>
            <person name="Yu G."/>
            <person name="Miranda M."/>
            <person name="Quach H.L."/>
            <person name="Tripp M."/>
            <person name="Chang C.H."/>
            <person name="Lee J.M."/>
            <person name="Toriumi M.J."/>
            <person name="Chan M.M."/>
            <person name="Tang C.C."/>
            <person name="Onodera C.S."/>
            <person name="Deng J.M."/>
            <person name="Akiyama K."/>
            <person name="Ansari Y."/>
            <person name="Arakawa T."/>
            <person name="Banh J."/>
            <person name="Banno F."/>
            <person name="Bowser L."/>
            <person name="Brooks S.Y."/>
            <person name="Carninci P."/>
            <person name="Chao Q."/>
            <person name="Choy N."/>
            <person name="Enju A."/>
            <person name="Goldsmith A.D."/>
            <person name="Gurjal M."/>
            <person name="Hansen N.F."/>
            <person name="Hayashizaki Y."/>
            <person name="Johnson-Hopson C."/>
            <person name="Hsuan V.W."/>
            <person name="Iida K."/>
            <person name="Karnes M."/>
            <person name="Khan S."/>
            <person name="Koesema E."/>
            <person name="Ishida J."/>
            <person name="Jiang P.X."/>
            <person name="Jones T."/>
            <person name="Kawai J."/>
            <person name="Kamiya A."/>
            <person name="Meyers C."/>
            <person name="Nakajima M."/>
            <person name="Narusaka M."/>
            <person name="Seki M."/>
            <person name="Sakurai T."/>
            <person name="Satou M."/>
            <person name="Tamse R."/>
            <person name="Vaysberg M."/>
            <person name="Wallender E.K."/>
            <person name="Wong C."/>
            <person name="Yamamura Y."/>
            <person name="Yuan S."/>
            <person name="Shinozaki K."/>
            <person name="Davis R.W."/>
            <person name="Theologis A."/>
            <person name="Ecker J.R."/>
        </authorList>
    </citation>
    <scope>NUCLEOTIDE SEQUENCE [LARGE SCALE MRNA]</scope>
    <source>
        <strain>cv. Columbia</strain>
    </source>
</reference>
<reference key="5">
    <citation type="submission" date="2002-03" db="EMBL/GenBank/DDBJ databases">
        <title>Full-length cDNA from Arabidopsis thaliana.</title>
        <authorList>
            <person name="Brover V.V."/>
            <person name="Troukhan M.E."/>
            <person name="Alexandrov N.A."/>
            <person name="Lu Y.-P."/>
            <person name="Flavell R.B."/>
            <person name="Feldmann K.A."/>
        </authorList>
    </citation>
    <scope>NUCLEOTIDE SEQUENCE [LARGE SCALE MRNA]</scope>
</reference>
<reference key="6">
    <citation type="journal article" date="2000" name="J. Biol. Chem.">
        <title>Down-regulation of the PSI-F subunit of photosystem I (PSI) in Arabidopsis thaliana. The PSI-F subunit is essential for photoautotrophic growth and contributes to antenna function.</title>
        <authorList>
            <person name="Haldrup A."/>
            <person name="Simpson D.J."/>
            <person name="Scheller H.V."/>
        </authorList>
    </citation>
    <scope>FUNCTION</scope>
</reference>
<reference key="7">
    <citation type="journal article" date="2007" name="Mol. Cell. Proteomics">
        <title>Multidimensional protein identification technology (MudPIT) analysis of ubiquitinated proteins in plants.</title>
        <authorList>
            <person name="Maor R."/>
            <person name="Jones A."/>
            <person name="Nuehse T.S."/>
            <person name="Studholme D.J."/>
            <person name="Peck S.C."/>
            <person name="Shirasu K."/>
        </authorList>
    </citation>
    <scope>IDENTIFICATION BY MASS SPECTROMETRY [LARGE SCALE ANALYSIS]</scope>
    <source>
        <strain>cv. Landsberg erecta</strain>
    </source>
</reference>
<reference key="8">
    <citation type="journal article" date="2008" name="PLoS ONE">
        <title>Sorting signals, N-terminal modifications and abundance of the chloroplast proteome.</title>
        <authorList>
            <person name="Zybailov B."/>
            <person name="Rutschow H."/>
            <person name="Friso G."/>
            <person name="Rudella A."/>
            <person name="Emanuelsson O."/>
            <person name="Sun Q."/>
            <person name="van Wijk K.J."/>
        </authorList>
    </citation>
    <scope>IDENTIFICATION BY MASS SPECTROMETRY</scope>
    <scope>SUBCELLULAR LOCATION [LARGE SCALE ANALYSIS]</scope>
</reference>
<reference key="9">
    <citation type="journal article" date="2009" name="Plant Physiol.">
        <title>Large-scale Arabidopsis phosphoproteome profiling reveals novel chloroplast kinase substrates and phosphorylation networks.</title>
        <authorList>
            <person name="Reiland S."/>
            <person name="Messerli G."/>
            <person name="Baerenfaller K."/>
            <person name="Gerrits B."/>
            <person name="Endler A."/>
            <person name="Grossmann J."/>
            <person name="Gruissem W."/>
            <person name="Baginsky S."/>
        </authorList>
    </citation>
    <scope>IDENTIFICATION BY MASS SPECTROMETRY [LARGE SCALE ANALYSIS]</scope>
</reference>
<reference key="10">
    <citation type="journal article" date="2012" name="Mol. Cell. Proteomics">
        <title>Comparative large-scale characterisation of plant vs. mammal proteins reveals similar and idiosyncratic N-alpha acetylation features.</title>
        <authorList>
            <person name="Bienvenut W.V."/>
            <person name="Sumpton D."/>
            <person name="Martinez A."/>
            <person name="Lilla S."/>
            <person name="Espagne C."/>
            <person name="Meinnel T."/>
            <person name="Giglione C."/>
        </authorList>
    </citation>
    <scope>IDENTIFICATION BY MASS SPECTROMETRY [LARGE SCALE ANALYSIS]</scope>
</reference>
<organism>
    <name type="scientific">Arabidopsis thaliana</name>
    <name type="common">Mouse-ear cress</name>
    <dbReference type="NCBI Taxonomy" id="3702"/>
    <lineage>
        <taxon>Eukaryota</taxon>
        <taxon>Viridiplantae</taxon>
        <taxon>Streptophyta</taxon>
        <taxon>Embryophyta</taxon>
        <taxon>Tracheophyta</taxon>
        <taxon>Spermatophyta</taxon>
        <taxon>Magnoliopsida</taxon>
        <taxon>eudicotyledons</taxon>
        <taxon>Gunneridae</taxon>
        <taxon>Pentapetalae</taxon>
        <taxon>rosids</taxon>
        <taxon>malvids</taxon>
        <taxon>Brassicales</taxon>
        <taxon>Brassicaceae</taxon>
        <taxon>Camelineae</taxon>
        <taxon>Arabidopsis</taxon>
    </lineage>
</organism>
<comment type="function">
    <text evidence="2">Participates in efficiency of electron transfer from plastocyanin to P700 (or cytochrome c553 in algae and cyanobacteria). This plastocyanin-docking protein contributes to the specific association of plastocyanin to PSI.</text>
</comment>
<comment type="subcellular location">
    <subcellularLocation>
        <location evidence="3">Plastid</location>
        <location evidence="3">Chloroplast thylakoid membrane</location>
        <topology>Single-pass membrane protein</topology>
        <orientation>Lumenal side</orientation>
    </subcellularLocation>
</comment>
<comment type="miscellaneous">
    <text>Plants lacking PSAF have altered thylakoid structure and are not viable.</text>
</comment>
<comment type="similarity">
    <text evidence="4">Belongs to the PsaF family.</text>
</comment>
<accession>Q9SHE8</accession>
<accession>Q941C1</accession>
<accession>Q9SUI8</accession>
<keyword id="KW-0002">3D-structure</keyword>
<keyword id="KW-0150">Chloroplast</keyword>
<keyword id="KW-0472">Membrane</keyword>
<keyword id="KW-0602">Photosynthesis</keyword>
<keyword id="KW-0603">Photosystem I</keyword>
<keyword id="KW-0934">Plastid</keyword>
<keyword id="KW-1185">Reference proteome</keyword>
<keyword id="KW-0793">Thylakoid</keyword>
<keyword id="KW-0809">Transit peptide</keyword>
<keyword id="KW-0812">Transmembrane</keyword>
<keyword id="KW-1133">Transmembrane helix</keyword>
<proteinExistence type="evidence at protein level"/>
<sequence length="221" mass="24173">MSLTIPANLVLNPRSNKSLTQSVPKSSARFVCSDDKSSSSTPQSMKAFSAAVALSSILLSAPMPAVADISGLTPCKDSKQFAKREKQQIKKLESSLKLYAPESAPALALNAQIEKTKRRFDNYGKYGLLCGSDGLPHLIVNGDQRHWGEFITPGILFLYIAGWIGWVGRSYLIAISGEKKPAMKEIIIDVPLASRIIFRGFIWPVAAYREFLNGDLIAKDV</sequence>
<name>PSAF_ARATH</name>
<protein>
    <recommendedName>
        <fullName>Photosystem I reaction center subunit III, chloroplastic</fullName>
    </recommendedName>
    <alternativeName>
        <fullName>Light-harvesting complex I 17 kDa protein</fullName>
    </alternativeName>
    <alternativeName>
        <fullName>PSI-F</fullName>
    </alternativeName>
</protein>
<dbReference type="EMBL" id="AJ245629">
    <property type="protein sequence ID" value="CAB52747.1"/>
    <property type="molecule type" value="mRNA"/>
</dbReference>
<dbReference type="EMBL" id="AC007654">
    <property type="protein sequence ID" value="AAF24595.1"/>
    <property type="molecule type" value="Genomic_DNA"/>
</dbReference>
<dbReference type="EMBL" id="CP002684">
    <property type="protein sequence ID" value="AEE31342.1"/>
    <property type="molecule type" value="Genomic_DNA"/>
</dbReference>
<dbReference type="EMBL" id="AF360251">
    <property type="protein sequence ID" value="AAK25961.1"/>
    <property type="molecule type" value="mRNA"/>
</dbReference>
<dbReference type="EMBL" id="AY048220">
    <property type="protein sequence ID" value="AAK82483.1"/>
    <property type="molecule type" value="mRNA"/>
</dbReference>
<dbReference type="EMBL" id="AY051021">
    <property type="protein sequence ID" value="AAK93698.1"/>
    <property type="molecule type" value="mRNA"/>
</dbReference>
<dbReference type="EMBL" id="AF424564">
    <property type="protein sequence ID" value="AAL11558.1"/>
    <property type="molecule type" value="mRNA"/>
</dbReference>
<dbReference type="EMBL" id="AY062712">
    <property type="protein sequence ID" value="AAL32790.1"/>
    <property type="molecule type" value="mRNA"/>
</dbReference>
<dbReference type="EMBL" id="AY094015">
    <property type="protein sequence ID" value="AAM16171.1"/>
    <property type="molecule type" value="mRNA"/>
</dbReference>
<dbReference type="EMBL" id="BT000680">
    <property type="protein sequence ID" value="AAN31826.1"/>
    <property type="molecule type" value="mRNA"/>
</dbReference>
<dbReference type="EMBL" id="BT002099">
    <property type="protein sequence ID" value="AAN72110.1"/>
    <property type="molecule type" value="mRNA"/>
</dbReference>
<dbReference type="EMBL" id="AY052281">
    <property type="protein sequence ID" value="AAK96474.1"/>
    <property type="molecule type" value="mRNA"/>
</dbReference>
<dbReference type="EMBL" id="AY088009">
    <property type="protein sequence ID" value="AAM65555.1"/>
    <property type="molecule type" value="mRNA"/>
</dbReference>
<dbReference type="RefSeq" id="NP_174418.1">
    <property type="nucleotide sequence ID" value="NM_102871.5"/>
</dbReference>
<dbReference type="PDB" id="7WFD">
    <property type="method" value="EM"/>
    <property type="resolution" value="3.25 A"/>
    <property type="chains" value="AF=1-221"/>
</dbReference>
<dbReference type="PDB" id="7WFE">
    <property type="method" value="EM"/>
    <property type="resolution" value="3.25 A"/>
    <property type="chains" value="BF=1-221"/>
</dbReference>
<dbReference type="PDB" id="7WG5">
    <property type="method" value="EM"/>
    <property type="resolution" value="3.89 A"/>
    <property type="chains" value="AF/BF=1-221"/>
</dbReference>
<dbReference type="PDB" id="8J6Z">
    <property type="method" value="EM"/>
    <property type="resolution" value="2.79 A"/>
    <property type="chains" value="F=1-221"/>
</dbReference>
<dbReference type="PDB" id="8J7A">
    <property type="method" value="EM"/>
    <property type="resolution" value="3.06 A"/>
    <property type="chains" value="F=1-221"/>
</dbReference>
<dbReference type="PDB" id="8J7B">
    <property type="method" value="EM"/>
    <property type="resolution" value="3.22 A"/>
    <property type="chains" value="F=1-221"/>
</dbReference>
<dbReference type="PDB" id="8WGH">
    <property type="method" value="EM"/>
    <property type="resolution" value="2.40 A"/>
    <property type="chains" value="F=1-221"/>
</dbReference>
<dbReference type="PDBsum" id="7WFD"/>
<dbReference type="PDBsum" id="7WFE"/>
<dbReference type="PDBsum" id="7WG5"/>
<dbReference type="PDBsum" id="8J6Z"/>
<dbReference type="PDBsum" id="8J7A"/>
<dbReference type="PDBsum" id="8J7B"/>
<dbReference type="PDBsum" id="8WGH"/>
<dbReference type="EMDB" id="EMD-32462"/>
<dbReference type="EMDB" id="EMD-32463"/>
<dbReference type="EMDB" id="EMD-32477"/>
<dbReference type="EMDB" id="EMD-36021"/>
<dbReference type="EMDB" id="EMD-36036"/>
<dbReference type="EMDB" id="EMD-36037"/>
<dbReference type="EMDB" id="EMD-37513"/>
<dbReference type="SMR" id="Q9SHE8"/>
<dbReference type="BioGRID" id="25256">
    <property type="interactions" value="32"/>
</dbReference>
<dbReference type="FunCoup" id="Q9SHE8">
    <property type="interactions" value="883"/>
</dbReference>
<dbReference type="STRING" id="3702.Q9SHE8"/>
<dbReference type="TCDB" id="5.B.4.1.1">
    <property type="family name" value="the plant photosystem i supercomplex (psi) family"/>
</dbReference>
<dbReference type="iPTMnet" id="Q9SHE8"/>
<dbReference type="PaxDb" id="3702-AT1G31330.1"/>
<dbReference type="ProteomicsDB" id="226321"/>
<dbReference type="EnsemblPlants" id="AT1G31330.1">
    <property type="protein sequence ID" value="AT1G31330.1"/>
    <property type="gene ID" value="AT1G31330"/>
</dbReference>
<dbReference type="GeneID" id="840021"/>
<dbReference type="Gramene" id="AT1G31330.1">
    <property type="protein sequence ID" value="AT1G31330.1"/>
    <property type="gene ID" value="AT1G31330"/>
</dbReference>
<dbReference type="KEGG" id="ath:AT1G31330"/>
<dbReference type="Araport" id="AT1G31330"/>
<dbReference type="TAIR" id="AT1G31330">
    <property type="gene designation" value="PSAF"/>
</dbReference>
<dbReference type="eggNOG" id="ENOG502QTZ8">
    <property type="taxonomic scope" value="Eukaryota"/>
</dbReference>
<dbReference type="HOGENOM" id="CLU_098828_0_1_1"/>
<dbReference type="InParanoid" id="Q9SHE8"/>
<dbReference type="OMA" id="NGDQAHW"/>
<dbReference type="OrthoDB" id="1920411at2759"/>
<dbReference type="PhylomeDB" id="Q9SHE8"/>
<dbReference type="BioCyc" id="MetaCyc:MONOMER-1092"/>
<dbReference type="CD-CODE" id="4299E36E">
    <property type="entry name" value="Nucleolus"/>
</dbReference>
<dbReference type="PRO" id="PR:Q9SHE8"/>
<dbReference type="Proteomes" id="UP000006548">
    <property type="component" value="Chromosome 1"/>
</dbReference>
<dbReference type="ExpressionAtlas" id="Q9SHE8">
    <property type="expression patterns" value="baseline and differential"/>
</dbReference>
<dbReference type="GO" id="GO:0009507">
    <property type="term" value="C:chloroplast"/>
    <property type="evidence" value="ECO:0007005"/>
    <property type="project" value="TAIR"/>
</dbReference>
<dbReference type="GO" id="GO:0009941">
    <property type="term" value="C:chloroplast envelope"/>
    <property type="evidence" value="ECO:0007005"/>
    <property type="project" value="TAIR"/>
</dbReference>
<dbReference type="GO" id="GO:0009534">
    <property type="term" value="C:chloroplast thylakoid"/>
    <property type="evidence" value="ECO:0007005"/>
    <property type="project" value="TAIR"/>
</dbReference>
<dbReference type="GO" id="GO:0009535">
    <property type="term" value="C:chloroplast thylakoid membrane"/>
    <property type="evidence" value="ECO:0007005"/>
    <property type="project" value="TAIR"/>
</dbReference>
<dbReference type="GO" id="GO:0005634">
    <property type="term" value="C:nucleus"/>
    <property type="evidence" value="ECO:0007005"/>
    <property type="project" value="TAIR"/>
</dbReference>
<dbReference type="GO" id="GO:0009538">
    <property type="term" value="C:photosystem I reaction center"/>
    <property type="evidence" value="ECO:0007669"/>
    <property type="project" value="InterPro"/>
</dbReference>
<dbReference type="GO" id="GO:0010287">
    <property type="term" value="C:plastoglobule"/>
    <property type="evidence" value="ECO:0007005"/>
    <property type="project" value="TAIR"/>
</dbReference>
<dbReference type="GO" id="GO:0009579">
    <property type="term" value="C:thylakoid"/>
    <property type="evidence" value="ECO:0007005"/>
    <property type="project" value="TAIR"/>
</dbReference>
<dbReference type="GO" id="GO:0003729">
    <property type="term" value="F:mRNA binding"/>
    <property type="evidence" value="ECO:0000314"/>
    <property type="project" value="TAIR"/>
</dbReference>
<dbReference type="GO" id="GO:0019904">
    <property type="term" value="F:protein domain specific binding"/>
    <property type="evidence" value="ECO:0000353"/>
    <property type="project" value="CAFA"/>
</dbReference>
<dbReference type="GO" id="GO:0015979">
    <property type="term" value="P:photosynthesis"/>
    <property type="evidence" value="ECO:0007669"/>
    <property type="project" value="UniProtKB-KW"/>
</dbReference>
<dbReference type="FunFam" id="1.10.8.110:FF:000001">
    <property type="entry name" value="Photosystem I reaction center subunit III"/>
    <property type="match status" value="1"/>
</dbReference>
<dbReference type="Gene3D" id="1.10.8.110">
    <property type="entry name" value="Photosystem I PsaF, reaction centre subunit III"/>
    <property type="match status" value="1"/>
</dbReference>
<dbReference type="InterPro" id="IPR003666">
    <property type="entry name" value="PSI_PsaF"/>
</dbReference>
<dbReference type="InterPro" id="IPR036577">
    <property type="entry name" value="PSI_PsaF_sf"/>
</dbReference>
<dbReference type="PANTHER" id="PTHR34939">
    <property type="entry name" value="PHOTOSYSTEM I REACTION CENTER SUBUNIT III, CHLOROPLASTIC"/>
    <property type="match status" value="1"/>
</dbReference>
<dbReference type="PANTHER" id="PTHR34939:SF1">
    <property type="entry name" value="PHOTOSYSTEM I REACTION CENTER SUBUNIT III, CHLOROPLASTIC"/>
    <property type="match status" value="1"/>
</dbReference>
<dbReference type="Pfam" id="PF02507">
    <property type="entry name" value="PSI_PsaF"/>
    <property type="match status" value="1"/>
</dbReference>
<dbReference type="SUPFAM" id="SSF81536">
    <property type="entry name" value="Subunit III of photosystem I reaction centre, PsaF"/>
    <property type="match status" value="1"/>
</dbReference>
<evidence type="ECO:0000255" key="1"/>
<evidence type="ECO:0000269" key="2">
    <source>
    </source>
</evidence>
<evidence type="ECO:0000269" key="3">
    <source>
    </source>
</evidence>
<evidence type="ECO:0000305" key="4"/>
<evidence type="ECO:0007829" key="5">
    <source>
        <dbReference type="PDB" id="8J6Z"/>
    </source>
</evidence>
<evidence type="ECO:0007829" key="6">
    <source>
        <dbReference type="PDB" id="8WGH"/>
    </source>
</evidence>
<feature type="transit peptide" description="Chloroplast" evidence="1">
    <location>
        <begin position="1"/>
        <end position="32"/>
    </location>
</feature>
<feature type="transit peptide" description="Thylakoid" evidence="4">
    <location>
        <begin position="33"/>
        <end position="67"/>
    </location>
</feature>
<feature type="chain" id="PRO_0000342091" description="Photosystem I reaction center subunit III, chloroplastic">
    <location>
        <begin position="68"/>
        <end position="221"/>
    </location>
</feature>
<feature type="transmembrane region" description="Helical" evidence="1">
    <location>
        <begin position="147"/>
        <end position="167"/>
    </location>
</feature>
<feature type="sequence conflict" description="In Ref. 1; CAB52747 and 5; AAM65555." evidence="4" ref="1 5">
    <original>A</original>
    <variation>T</variation>
    <location>
        <position position="7"/>
    </location>
</feature>
<feature type="sequence conflict" description="In Ref. 4; AAK96474." evidence="4" ref="4">
    <original>V</original>
    <variation>F</variation>
    <location>
        <position position="31"/>
    </location>
</feature>
<feature type="sequence conflict" description="In Ref. 1; CAB52747 and 5; AAM65555." evidence="4" ref="1 5">
    <original>T</original>
    <variation>A</variation>
    <location>
        <position position="41"/>
    </location>
</feature>
<feature type="helix" evidence="6">
    <location>
        <begin position="69"/>
        <end position="71"/>
    </location>
</feature>
<feature type="turn" evidence="6">
    <location>
        <begin position="75"/>
        <end position="77"/>
    </location>
</feature>
<feature type="helix" evidence="6">
    <location>
        <begin position="79"/>
        <end position="96"/>
    </location>
</feature>
<feature type="helix" evidence="6">
    <location>
        <begin position="104"/>
        <end position="125"/>
    </location>
</feature>
<feature type="strand" evidence="6">
    <location>
        <begin position="136"/>
        <end position="138"/>
    </location>
</feature>
<feature type="helix" evidence="5">
    <location>
        <begin position="144"/>
        <end position="146"/>
    </location>
</feature>
<feature type="turn" evidence="6">
    <location>
        <begin position="147"/>
        <end position="150"/>
    </location>
</feature>
<feature type="helix" evidence="6">
    <location>
        <begin position="151"/>
        <end position="174"/>
    </location>
</feature>
<feature type="strand" evidence="6">
    <location>
        <begin position="177"/>
        <end position="180"/>
    </location>
</feature>
<feature type="helix" evidence="6">
    <location>
        <begin position="183"/>
        <end position="186"/>
    </location>
</feature>
<feature type="helix" evidence="6">
    <location>
        <begin position="190"/>
        <end position="197"/>
    </location>
</feature>
<feature type="helix" evidence="6">
    <location>
        <begin position="198"/>
        <end position="202"/>
    </location>
</feature>
<feature type="helix" evidence="6">
    <location>
        <begin position="203"/>
        <end position="213"/>
    </location>
</feature>
<gene>
    <name type="primary">PSAF</name>
    <name type="ordered locus">At1g31330</name>
    <name type="ORF">T19E23.12</name>
</gene>